<sequence length="901" mass="101268">MVSLGGLARKLFGSANDRRVRGYQGRVDAINALEAEMKALSDEALAAKTVEFRQQLAEGKTLDDLLVPAFAVVREAARRVLGLRPFDVQLIGGMILHERSISEMKTGEGKTLVATLPVYLNALAGKGVHVVTVNDYLAQRDAGMMGRIYGFLGLTTGVIVHGLTDEQRRDAYACDVTYATNNELGFDYLRDNMKYERAQMVQRGHFFAIVDEVDSILVDEARTPLIISGPLDDRSDLYNTINDFIPLLSPEDYEIDEKQRSANFSEEGTEKLENLLRQAGLLKGESLYDIENVAIVHHVNNALKAHKLFTRDKDYIVRNDEIVIIDEFTGRMMPGRRYSEGQHQALEAKEKVQIQPENQTLASVTFQNYFRMYEKLAGMTGTAATEAEEFGNIYGLEVVEVPTNLPIKRADEDDEVYRTAGEKYKAIIDEIKAAHERGQPMLVGTTSIEKSELLADMLKKSGFSKFQVLNARYHEQEAFIVAQAGVPGAVTIATNMAGRGTDIQLGGNPDMRIQQELAEVEPGPEREAREKAIREEVQKLKEKALDAGGLYVLATERHESRRIDNQLRGRSGRQGDPGRSKFFLSIQDDLMRIFGSDRMDGMLQKLGLKEGEAIVHPWINKALERAQKKVEARNFDIRKNLLKYDDVLNDQRKVIFEQRLELMDAESVSDTVADMRNEVIEDIVSKRIPERAYAEQWDVTGLKADVQQYFNLDLPVPDWAAEEGIAEDDILERVTAAVDAAAAERAERFGPEIMQYVERSVVLQTLDHLWREHIVNLDHLRSVIGFRGYAQRDPLQEYKSEAFELFQALLVNLRQAVSAQLMRVELVRETPQEPQPLPPMQGHHIDPLTGEDDFAEAPLLAVAPADRNPAEPSSWGKVARNEPCPCGSGKKYKHCHGIYEA</sequence>
<name>SECA_SINFN</name>
<dbReference type="EC" id="7.4.2.8" evidence="1"/>
<dbReference type="EMBL" id="CP001389">
    <property type="protein sequence ID" value="ACP26422.1"/>
    <property type="molecule type" value="Genomic_DNA"/>
</dbReference>
<dbReference type="RefSeq" id="WP_012709179.1">
    <property type="nucleotide sequence ID" value="NC_012587.1"/>
</dbReference>
<dbReference type="RefSeq" id="YP_002827175.1">
    <property type="nucleotide sequence ID" value="NC_012587.1"/>
</dbReference>
<dbReference type="SMR" id="C3MHS0"/>
<dbReference type="STRING" id="394.NGR_c26720"/>
<dbReference type="KEGG" id="rhi:NGR_c26720"/>
<dbReference type="PATRIC" id="fig|394.7.peg.5497"/>
<dbReference type="eggNOG" id="COG0653">
    <property type="taxonomic scope" value="Bacteria"/>
</dbReference>
<dbReference type="HOGENOM" id="CLU_005314_3_0_5"/>
<dbReference type="OrthoDB" id="9805579at2"/>
<dbReference type="Proteomes" id="UP000001054">
    <property type="component" value="Chromosome"/>
</dbReference>
<dbReference type="GO" id="GO:0031522">
    <property type="term" value="C:cell envelope Sec protein transport complex"/>
    <property type="evidence" value="ECO:0007669"/>
    <property type="project" value="TreeGrafter"/>
</dbReference>
<dbReference type="GO" id="GO:0005829">
    <property type="term" value="C:cytosol"/>
    <property type="evidence" value="ECO:0007669"/>
    <property type="project" value="TreeGrafter"/>
</dbReference>
<dbReference type="GO" id="GO:0005886">
    <property type="term" value="C:plasma membrane"/>
    <property type="evidence" value="ECO:0007669"/>
    <property type="project" value="UniProtKB-SubCell"/>
</dbReference>
<dbReference type="GO" id="GO:0005524">
    <property type="term" value="F:ATP binding"/>
    <property type="evidence" value="ECO:0007669"/>
    <property type="project" value="UniProtKB-UniRule"/>
</dbReference>
<dbReference type="GO" id="GO:0046872">
    <property type="term" value="F:metal ion binding"/>
    <property type="evidence" value="ECO:0007669"/>
    <property type="project" value="UniProtKB-KW"/>
</dbReference>
<dbReference type="GO" id="GO:0008564">
    <property type="term" value="F:protein-exporting ATPase activity"/>
    <property type="evidence" value="ECO:0007669"/>
    <property type="project" value="UniProtKB-EC"/>
</dbReference>
<dbReference type="GO" id="GO:0065002">
    <property type="term" value="P:intracellular protein transmembrane transport"/>
    <property type="evidence" value="ECO:0007669"/>
    <property type="project" value="UniProtKB-UniRule"/>
</dbReference>
<dbReference type="GO" id="GO:0017038">
    <property type="term" value="P:protein import"/>
    <property type="evidence" value="ECO:0007669"/>
    <property type="project" value="InterPro"/>
</dbReference>
<dbReference type="GO" id="GO:0006605">
    <property type="term" value="P:protein targeting"/>
    <property type="evidence" value="ECO:0007669"/>
    <property type="project" value="UniProtKB-UniRule"/>
</dbReference>
<dbReference type="GO" id="GO:0043952">
    <property type="term" value="P:protein transport by the Sec complex"/>
    <property type="evidence" value="ECO:0007669"/>
    <property type="project" value="TreeGrafter"/>
</dbReference>
<dbReference type="CDD" id="cd17928">
    <property type="entry name" value="DEXDc_SecA"/>
    <property type="match status" value="1"/>
</dbReference>
<dbReference type="CDD" id="cd18803">
    <property type="entry name" value="SF2_C_secA"/>
    <property type="match status" value="1"/>
</dbReference>
<dbReference type="FunFam" id="3.90.1440.10:FF:000001">
    <property type="entry name" value="Preprotein translocase subunit SecA"/>
    <property type="match status" value="1"/>
</dbReference>
<dbReference type="FunFam" id="1.10.3060.10:FF:000003">
    <property type="entry name" value="Protein translocase subunit SecA"/>
    <property type="match status" value="1"/>
</dbReference>
<dbReference type="FunFam" id="3.40.50.300:FF:000334">
    <property type="entry name" value="Protein translocase subunit SecA"/>
    <property type="match status" value="1"/>
</dbReference>
<dbReference type="FunFam" id="3.40.50.300:FF:001790">
    <property type="entry name" value="Protein translocase subunit SecA"/>
    <property type="match status" value="1"/>
</dbReference>
<dbReference type="Gene3D" id="3.10.450.50">
    <property type="match status" value="1"/>
</dbReference>
<dbReference type="Gene3D" id="1.10.3060.10">
    <property type="entry name" value="Helical scaffold and wing domains of SecA"/>
    <property type="match status" value="1"/>
</dbReference>
<dbReference type="Gene3D" id="3.40.50.300">
    <property type="entry name" value="P-loop containing nucleotide triphosphate hydrolases"/>
    <property type="match status" value="2"/>
</dbReference>
<dbReference type="Gene3D" id="3.90.1440.10">
    <property type="entry name" value="SecA, preprotein cross-linking domain"/>
    <property type="match status" value="1"/>
</dbReference>
<dbReference type="HAMAP" id="MF_01382">
    <property type="entry name" value="SecA"/>
    <property type="match status" value="1"/>
</dbReference>
<dbReference type="InterPro" id="IPR014001">
    <property type="entry name" value="Helicase_ATP-bd"/>
</dbReference>
<dbReference type="InterPro" id="IPR027417">
    <property type="entry name" value="P-loop_NTPase"/>
</dbReference>
<dbReference type="InterPro" id="IPR004027">
    <property type="entry name" value="SEC_C_motif"/>
</dbReference>
<dbReference type="InterPro" id="IPR000185">
    <property type="entry name" value="SecA"/>
</dbReference>
<dbReference type="InterPro" id="IPR020937">
    <property type="entry name" value="SecA_CS"/>
</dbReference>
<dbReference type="InterPro" id="IPR011115">
    <property type="entry name" value="SecA_DEAD"/>
</dbReference>
<dbReference type="InterPro" id="IPR014018">
    <property type="entry name" value="SecA_motor_DEAD"/>
</dbReference>
<dbReference type="InterPro" id="IPR011130">
    <property type="entry name" value="SecA_preprotein_X-link_dom"/>
</dbReference>
<dbReference type="InterPro" id="IPR044722">
    <property type="entry name" value="SecA_SF2_C"/>
</dbReference>
<dbReference type="InterPro" id="IPR011116">
    <property type="entry name" value="SecA_Wing/Scaffold"/>
</dbReference>
<dbReference type="InterPro" id="IPR036266">
    <property type="entry name" value="SecA_Wing/Scaffold_sf"/>
</dbReference>
<dbReference type="InterPro" id="IPR036670">
    <property type="entry name" value="SecA_X-link_sf"/>
</dbReference>
<dbReference type="NCBIfam" id="NF009538">
    <property type="entry name" value="PRK12904.1"/>
    <property type="match status" value="1"/>
</dbReference>
<dbReference type="NCBIfam" id="TIGR00963">
    <property type="entry name" value="secA"/>
    <property type="match status" value="1"/>
</dbReference>
<dbReference type="PANTHER" id="PTHR30612:SF0">
    <property type="entry name" value="CHLOROPLAST PROTEIN-TRANSPORTING ATPASE"/>
    <property type="match status" value="1"/>
</dbReference>
<dbReference type="PANTHER" id="PTHR30612">
    <property type="entry name" value="SECA INNER MEMBRANE COMPONENT OF SEC PROTEIN SECRETION SYSTEM"/>
    <property type="match status" value="1"/>
</dbReference>
<dbReference type="Pfam" id="PF21090">
    <property type="entry name" value="P-loop_SecA"/>
    <property type="match status" value="1"/>
</dbReference>
<dbReference type="Pfam" id="PF02810">
    <property type="entry name" value="SEC-C"/>
    <property type="match status" value="1"/>
</dbReference>
<dbReference type="Pfam" id="PF07517">
    <property type="entry name" value="SecA_DEAD"/>
    <property type="match status" value="1"/>
</dbReference>
<dbReference type="Pfam" id="PF01043">
    <property type="entry name" value="SecA_PP_bind"/>
    <property type="match status" value="1"/>
</dbReference>
<dbReference type="Pfam" id="PF07516">
    <property type="entry name" value="SecA_SW"/>
    <property type="match status" value="1"/>
</dbReference>
<dbReference type="PRINTS" id="PR00906">
    <property type="entry name" value="SECA"/>
</dbReference>
<dbReference type="SMART" id="SM00957">
    <property type="entry name" value="SecA_DEAD"/>
    <property type="match status" value="1"/>
</dbReference>
<dbReference type="SMART" id="SM00958">
    <property type="entry name" value="SecA_PP_bind"/>
    <property type="match status" value="1"/>
</dbReference>
<dbReference type="SUPFAM" id="SSF81886">
    <property type="entry name" value="Helical scaffold and wing domains of SecA"/>
    <property type="match status" value="1"/>
</dbReference>
<dbReference type="SUPFAM" id="SSF52540">
    <property type="entry name" value="P-loop containing nucleoside triphosphate hydrolases"/>
    <property type="match status" value="2"/>
</dbReference>
<dbReference type="SUPFAM" id="SSF81767">
    <property type="entry name" value="Pre-protein crosslinking domain of SecA"/>
    <property type="match status" value="1"/>
</dbReference>
<dbReference type="PROSITE" id="PS01312">
    <property type="entry name" value="SECA"/>
    <property type="match status" value="1"/>
</dbReference>
<dbReference type="PROSITE" id="PS51196">
    <property type="entry name" value="SECA_MOTOR_DEAD"/>
    <property type="match status" value="1"/>
</dbReference>
<organism>
    <name type="scientific">Sinorhizobium fredii (strain NBRC 101917 / NGR234)</name>
    <dbReference type="NCBI Taxonomy" id="394"/>
    <lineage>
        <taxon>Bacteria</taxon>
        <taxon>Pseudomonadati</taxon>
        <taxon>Pseudomonadota</taxon>
        <taxon>Alphaproteobacteria</taxon>
        <taxon>Hyphomicrobiales</taxon>
        <taxon>Rhizobiaceae</taxon>
        <taxon>Sinorhizobium/Ensifer group</taxon>
        <taxon>Sinorhizobium</taxon>
    </lineage>
</organism>
<comment type="function">
    <text evidence="1">Part of the Sec protein translocase complex. Interacts with the SecYEG preprotein conducting channel. Has a central role in coupling the hydrolysis of ATP to the transfer of proteins into and across the cell membrane, serving both as a receptor for the preprotein-SecB complex and as an ATP-driven molecular motor driving the stepwise translocation of polypeptide chains across the membrane.</text>
</comment>
<comment type="catalytic activity">
    <reaction evidence="1">
        <text>ATP + H2O + cellular proteinSide 1 = ADP + phosphate + cellular proteinSide 2.</text>
        <dbReference type="EC" id="7.4.2.8"/>
    </reaction>
</comment>
<comment type="cofactor">
    <cofactor evidence="1">
        <name>Zn(2+)</name>
        <dbReference type="ChEBI" id="CHEBI:29105"/>
    </cofactor>
    <text evidence="1">May bind 1 zinc ion per subunit.</text>
</comment>
<comment type="subunit">
    <text evidence="1">Monomer and homodimer. Part of the essential Sec protein translocation apparatus which comprises SecA, SecYEG and auxiliary proteins SecDF-YajC and YidC.</text>
</comment>
<comment type="subcellular location">
    <subcellularLocation>
        <location evidence="1">Cell inner membrane</location>
        <topology evidence="1">Peripheral membrane protein</topology>
        <orientation evidence="1">Cytoplasmic side</orientation>
    </subcellularLocation>
    <subcellularLocation>
        <location evidence="1">Cytoplasm</location>
    </subcellularLocation>
    <text evidence="1">Distribution is 50-50.</text>
</comment>
<comment type="similarity">
    <text evidence="1">Belongs to the SecA family.</text>
</comment>
<proteinExistence type="inferred from homology"/>
<feature type="chain" id="PRO_1000184241" description="Protein translocase subunit SecA">
    <location>
        <begin position="1"/>
        <end position="901"/>
    </location>
</feature>
<feature type="binding site" evidence="1">
    <location>
        <position position="89"/>
    </location>
    <ligand>
        <name>ATP</name>
        <dbReference type="ChEBI" id="CHEBI:30616"/>
    </ligand>
</feature>
<feature type="binding site" evidence="1">
    <location>
        <begin position="107"/>
        <end position="111"/>
    </location>
    <ligand>
        <name>ATP</name>
        <dbReference type="ChEBI" id="CHEBI:30616"/>
    </ligand>
</feature>
<feature type="binding site" evidence="1">
    <location>
        <position position="502"/>
    </location>
    <ligand>
        <name>ATP</name>
        <dbReference type="ChEBI" id="CHEBI:30616"/>
    </ligand>
</feature>
<feature type="binding site" evidence="1">
    <location>
        <position position="884"/>
    </location>
    <ligand>
        <name>Zn(2+)</name>
        <dbReference type="ChEBI" id="CHEBI:29105"/>
    </ligand>
</feature>
<feature type="binding site" evidence="1">
    <location>
        <position position="886"/>
    </location>
    <ligand>
        <name>Zn(2+)</name>
        <dbReference type="ChEBI" id="CHEBI:29105"/>
    </ligand>
</feature>
<feature type="binding site" evidence="1">
    <location>
        <position position="895"/>
    </location>
    <ligand>
        <name>Zn(2+)</name>
        <dbReference type="ChEBI" id="CHEBI:29105"/>
    </ligand>
</feature>
<feature type="binding site" evidence="1">
    <location>
        <position position="896"/>
    </location>
    <ligand>
        <name>Zn(2+)</name>
        <dbReference type="ChEBI" id="CHEBI:29105"/>
    </ligand>
</feature>
<accession>C3MHS0</accession>
<keyword id="KW-0067">ATP-binding</keyword>
<keyword id="KW-0997">Cell inner membrane</keyword>
<keyword id="KW-1003">Cell membrane</keyword>
<keyword id="KW-0963">Cytoplasm</keyword>
<keyword id="KW-0472">Membrane</keyword>
<keyword id="KW-0479">Metal-binding</keyword>
<keyword id="KW-0547">Nucleotide-binding</keyword>
<keyword id="KW-0653">Protein transport</keyword>
<keyword id="KW-1185">Reference proteome</keyword>
<keyword id="KW-1278">Translocase</keyword>
<keyword id="KW-0811">Translocation</keyword>
<keyword id="KW-0813">Transport</keyword>
<keyword id="KW-0862">Zinc</keyword>
<reference key="1">
    <citation type="journal article" date="2009" name="Appl. Environ. Microbiol.">
        <title>Rhizobium sp. strain NGR234 possesses a remarkable number of secretion systems.</title>
        <authorList>
            <person name="Schmeisser C."/>
            <person name="Liesegang H."/>
            <person name="Krysciak D."/>
            <person name="Bakkou N."/>
            <person name="Le Quere A."/>
            <person name="Wollherr A."/>
            <person name="Heinemeyer I."/>
            <person name="Morgenstern B."/>
            <person name="Pommerening-Roeser A."/>
            <person name="Flores M."/>
            <person name="Palacios R."/>
            <person name="Brenner S."/>
            <person name="Gottschalk G."/>
            <person name="Schmitz R.A."/>
            <person name="Broughton W.J."/>
            <person name="Perret X."/>
            <person name="Strittmatter A.W."/>
            <person name="Streit W.R."/>
        </authorList>
    </citation>
    <scope>NUCLEOTIDE SEQUENCE [LARGE SCALE GENOMIC DNA]</scope>
    <source>
        <strain>NBRC 101917 / NGR234</strain>
    </source>
</reference>
<evidence type="ECO:0000255" key="1">
    <source>
        <dbReference type="HAMAP-Rule" id="MF_01382"/>
    </source>
</evidence>
<gene>
    <name evidence="1" type="primary">secA</name>
    <name type="ordered locus">NGR_c26720</name>
</gene>
<protein>
    <recommendedName>
        <fullName evidence="1">Protein translocase subunit SecA</fullName>
        <ecNumber evidence="1">7.4.2.8</ecNumber>
    </recommendedName>
</protein>